<accession>P63262</accession>
<accession>O33916</accession>
<reference key="1">
    <citation type="journal article" date="2001" name="Nature">
        <title>Complete genome sequence of a multiple drug resistant Salmonella enterica serovar Typhi CT18.</title>
        <authorList>
            <person name="Parkhill J."/>
            <person name="Dougan G."/>
            <person name="James K.D."/>
            <person name="Thomson N.R."/>
            <person name="Pickard D."/>
            <person name="Wain J."/>
            <person name="Churcher C.M."/>
            <person name="Mungall K.L."/>
            <person name="Bentley S.D."/>
            <person name="Holden M.T.G."/>
            <person name="Sebaihia M."/>
            <person name="Baker S."/>
            <person name="Basham D."/>
            <person name="Brooks K."/>
            <person name="Chillingworth T."/>
            <person name="Connerton P."/>
            <person name="Cronin A."/>
            <person name="Davis P."/>
            <person name="Davies R.M."/>
            <person name="Dowd L."/>
            <person name="White N."/>
            <person name="Farrar J."/>
            <person name="Feltwell T."/>
            <person name="Hamlin N."/>
            <person name="Haque A."/>
            <person name="Hien T.T."/>
            <person name="Holroyd S."/>
            <person name="Jagels K."/>
            <person name="Krogh A."/>
            <person name="Larsen T.S."/>
            <person name="Leather S."/>
            <person name="Moule S."/>
            <person name="O'Gaora P."/>
            <person name="Parry C."/>
            <person name="Quail M.A."/>
            <person name="Rutherford K.M."/>
            <person name="Simmonds M."/>
            <person name="Skelton J."/>
            <person name="Stevens K."/>
            <person name="Whitehead S."/>
            <person name="Barrell B.G."/>
        </authorList>
    </citation>
    <scope>NUCLEOTIDE SEQUENCE [LARGE SCALE GENOMIC DNA]</scope>
    <source>
        <strain>CT18</strain>
    </source>
</reference>
<reference key="2">
    <citation type="journal article" date="2003" name="J. Bacteriol.">
        <title>Comparative genomics of Salmonella enterica serovar Typhi strains Ty2 and CT18.</title>
        <authorList>
            <person name="Deng W."/>
            <person name="Liou S.-R."/>
            <person name="Plunkett G. III"/>
            <person name="Mayhew G.F."/>
            <person name="Rose D.J."/>
            <person name="Burland V."/>
            <person name="Kodoyianni V."/>
            <person name="Schwartz D.C."/>
            <person name="Blattner F.R."/>
        </authorList>
    </citation>
    <scope>NUCLEOTIDE SEQUENCE [LARGE SCALE GENOMIC DNA]</scope>
    <source>
        <strain>ATCC 700931 / Ty2</strain>
    </source>
</reference>
<feature type="chain" id="PRO_0000169994" description="Curved DNA-binding protein">
    <location>
        <begin position="1"/>
        <end position="306"/>
    </location>
</feature>
<feature type="domain" description="J" evidence="1">
    <location>
        <begin position="5"/>
        <end position="69"/>
    </location>
</feature>
<evidence type="ECO:0000255" key="1">
    <source>
        <dbReference type="HAMAP-Rule" id="MF_01154"/>
    </source>
</evidence>
<sequence length="306" mass="34693">MELKDYYAIMGVKPTDDLKTIKTAYRRLARKYHPDVSKEPDAEARFKEVAEAWEVLSDEQRRAEYDQLWQHRNDPQFNRQFQQHEGQPYNAEDFDDIFSSIFGQHGRHSHHRHAARGHDIEIEVAVFLEETLEEHQRTISYSVPVYNAFGLVEREIPKTLNVKIPAGVSNGQRIRLKGQGTPGENGGPNGDLWLVIHIAPHPLFDIVNQDLEVVLPLAPWEAALGAKVSVPTLKERILLTIPPGSQAGQRLRIKGKGLASKKHTGDLYAIIKIVMPPKPDEKTAALWQQLADAQSSFDPRQQWGKA</sequence>
<protein>
    <recommendedName>
        <fullName evidence="1">Curved DNA-binding protein</fullName>
    </recommendedName>
</protein>
<comment type="function">
    <text evidence="1">DNA-binding protein that preferentially recognizes a curved DNA sequence. It is probably a functional analog of DnaJ; displays overlapping activities with DnaJ, but functions under different conditions, probably acting as a molecular chaperone in an adaptive response to environmental stresses other than heat shock. Lacks autonomous chaperone activity; binds native substrates and targets them for recognition by DnaK. Its activity is inhibited by the binding of CbpM.</text>
</comment>
<comment type="subcellular location">
    <subcellularLocation>
        <location evidence="1">Cytoplasm</location>
        <location evidence="1">Nucleoid</location>
    </subcellularLocation>
</comment>
<proteinExistence type="inferred from homology"/>
<dbReference type="EMBL" id="AL513382">
    <property type="protein sequence ID" value="CAD08237.1"/>
    <property type="molecule type" value="Genomic_DNA"/>
</dbReference>
<dbReference type="EMBL" id="AE014613">
    <property type="protein sequence ID" value="AAO69430.1"/>
    <property type="molecule type" value="Genomic_DNA"/>
</dbReference>
<dbReference type="RefSeq" id="NP_455607.1">
    <property type="nucleotide sequence ID" value="NC_003198.1"/>
</dbReference>
<dbReference type="RefSeq" id="WP_000420603.1">
    <property type="nucleotide sequence ID" value="NZ_WSUR01000018.1"/>
</dbReference>
<dbReference type="SMR" id="P63262"/>
<dbReference type="STRING" id="220341.gene:17585116"/>
<dbReference type="KEGG" id="stt:t1808"/>
<dbReference type="KEGG" id="sty:STY1148"/>
<dbReference type="PATRIC" id="fig|220341.7.peg.1148"/>
<dbReference type="eggNOG" id="COG0484">
    <property type="taxonomic scope" value="Bacteria"/>
</dbReference>
<dbReference type="HOGENOM" id="CLU_017633_0_0_6"/>
<dbReference type="OMA" id="FAGRDFY"/>
<dbReference type="OrthoDB" id="9779889at2"/>
<dbReference type="Proteomes" id="UP000000541">
    <property type="component" value="Chromosome"/>
</dbReference>
<dbReference type="Proteomes" id="UP000002670">
    <property type="component" value="Chromosome"/>
</dbReference>
<dbReference type="GO" id="GO:0005737">
    <property type="term" value="C:cytoplasm"/>
    <property type="evidence" value="ECO:0007669"/>
    <property type="project" value="UniProtKB-UniRule"/>
</dbReference>
<dbReference type="GO" id="GO:0009295">
    <property type="term" value="C:nucleoid"/>
    <property type="evidence" value="ECO:0007669"/>
    <property type="project" value="UniProtKB-SubCell"/>
</dbReference>
<dbReference type="GO" id="GO:0003681">
    <property type="term" value="F:bent DNA binding"/>
    <property type="evidence" value="ECO:0007669"/>
    <property type="project" value="UniProtKB-UniRule"/>
</dbReference>
<dbReference type="GO" id="GO:0051082">
    <property type="term" value="F:unfolded protein binding"/>
    <property type="evidence" value="ECO:0007669"/>
    <property type="project" value="InterPro"/>
</dbReference>
<dbReference type="GO" id="GO:0051085">
    <property type="term" value="P:chaperone cofactor-dependent protein refolding"/>
    <property type="evidence" value="ECO:0007669"/>
    <property type="project" value="TreeGrafter"/>
</dbReference>
<dbReference type="GO" id="GO:0042026">
    <property type="term" value="P:protein refolding"/>
    <property type="evidence" value="ECO:0007669"/>
    <property type="project" value="TreeGrafter"/>
</dbReference>
<dbReference type="CDD" id="cd06257">
    <property type="entry name" value="DnaJ"/>
    <property type="match status" value="1"/>
</dbReference>
<dbReference type="CDD" id="cd10747">
    <property type="entry name" value="DnaJ_C"/>
    <property type="match status" value="1"/>
</dbReference>
<dbReference type="FunFam" id="1.10.287.110:FF:000013">
    <property type="entry name" value="Curved DNA-binding protein"/>
    <property type="match status" value="1"/>
</dbReference>
<dbReference type="FunFam" id="2.60.260.20:FF:000008">
    <property type="entry name" value="Curved DNA-binding protein"/>
    <property type="match status" value="1"/>
</dbReference>
<dbReference type="Gene3D" id="1.10.287.110">
    <property type="entry name" value="DnaJ domain"/>
    <property type="match status" value="1"/>
</dbReference>
<dbReference type="Gene3D" id="1.20.5.460">
    <property type="entry name" value="Single helix bin"/>
    <property type="match status" value="1"/>
</dbReference>
<dbReference type="Gene3D" id="2.60.260.20">
    <property type="entry name" value="Urease metallochaperone UreE, N-terminal domain"/>
    <property type="match status" value="2"/>
</dbReference>
<dbReference type="HAMAP" id="MF_01154">
    <property type="entry name" value="CbpA"/>
    <property type="match status" value="1"/>
</dbReference>
<dbReference type="InterPro" id="IPR023859">
    <property type="entry name" value="DNA-bd_curved-DNA"/>
</dbReference>
<dbReference type="InterPro" id="IPR002939">
    <property type="entry name" value="DnaJ_C"/>
</dbReference>
<dbReference type="InterPro" id="IPR001623">
    <property type="entry name" value="DnaJ_domain"/>
</dbReference>
<dbReference type="InterPro" id="IPR018253">
    <property type="entry name" value="DnaJ_domain_CS"/>
</dbReference>
<dbReference type="InterPro" id="IPR008971">
    <property type="entry name" value="HSP40/DnaJ_pept-bd"/>
</dbReference>
<dbReference type="InterPro" id="IPR036869">
    <property type="entry name" value="J_dom_sf"/>
</dbReference>
<dbReference type="NCBIfam" id="NF007618">
    <property type="entry name" value="PRK10266.1"/>
    <property type="match status" value="1"/>
</dbReference>
<dbReference type="PANTHER" id="PTHR43096">
    <property type="entry name" value="DNAJ HOMOLOG 1, MITOCHONDRIAL-RELATED"/>
    <property type="match status" value="1"/>
</dbReference>
<dbReference type="PANTHER" id="PTHR43096:SF52">
    <property type="entry name" value="DNAJ HOMOLOG 1, MITOCHONDRIAL-RELATED"/>
    <property type="match status" value="1"/>
</dbReference>
<dbReference type="Pfam" id="PF00226">
    <property type="entry name" value="DnaJ"/>
    <property type="match status" value="1"/>
</dbReference>
<dbReference type="Pfam" id="PF01556">
    <property type="entry name" value="DnaJ_C"/>
    <property type="match status" value="1"/>
</dbReference>
<dbReference type="PRINTS" id="PR00625">
    <property type="entry name" value="JDOMAIN"/>
</dbReference>
<dbReference type="SMART" id="SM00271">
    <property type="entry name" value="DnaJ"/>
    <property type="match status" value="1"/>
</dbReference>
<dbReference type="SUPFAM" id="SSF46565">
    <property type="entry name" value="Chaperone J-domain"/>
    <property type="match status" value="1"/>
</dbReference>
<dbReference type="SUPFAM" id="SSF49493">
    <property type="entry name" value="HSP40/DnaJ peptide-binding domain"/>
    <property type="match status" value="2"/>
</dbReference>
<dbReference type="PROSITE" id="PS00636">
    <property type="entry name" value="DNAJ_1"/>
    <property type="match status" value="1"/>
</dbReference>
<dbReference type="PROSITE" id="PS50076">
    <property type="entry name" value="DNAJ_2"/>
    <property type="match status" value="1"/>
</dbReference>
<organism>
    <name type="scientific">Salmonella typhi</name>
    <dbReference type="NCBI Taxonomy" id="90370"/>
    <lineage>
        <taxon>Bacteria</taxon>
        <taxon>Pseudomonadati</taxon>
        <taxon>Pseudomonadota</taxon>
        <taxon>Gammaproteobacteria</taxon>
        <taxon>Enterobacterales</taxon>
        <taxon>Enterobacteriaceae</taxon>
        <taxon>Salmonella</taxon>
    </lineage>
</organism>
<keyword id="KW-0143">Chaperone</keyword>
<keyword id="KW-0963">Cytoplasm</keyword>
<keyword id="KW-0238">DNA-binding</keyword>
<name>CBPA_SALTI</name>
<gene>
    <name evidence="1" type="primary">cbpA</name>
    <name type="ordered locus">STY1148</name>
    <name type="ordered locus">t1808</name>
</gene>